<feature type="chain" id="PRO_1000166911" description="Large ribosomal subunit protein uL14">
    <location>
        <begin position="1"/>
        <end position="122"/>
    </location>
</feature>
<evidence type="ECO:0000255" key="1">
    <source>
        <dbReference type="HAMAP-Rule" id="MF_01367"/>
    </source>
</evidence>
<evidence type="ECO:0000305" key="2"/>
<sequence length="122" mass="13268">MIQQQTRLKVADNSGAKEIMCIRVLGGSHRKWGNIGDVIVASVKSATPGGVVKKGEVVKAVIVRSVKGLRRADGSYIKFDENAAVIIKDDKNPKGTRIFGPVARELRDKEFNKILSLAPEVL</sequence>
<dbReference type="EMBL" id="CP001581">
    <property type="protein sequence ID" value="ACO87281.1"/>
    <property type="molecule type" value="Genomic_DNA"/>
</dbReference>
<dbReference type="RefSeq" id="WP_003357295.1">
    <property type="nucleotide sequence ID" value="NC_012563.1"/>
</dbReference>
<dbReference type="SMR" id="C1FMU1"/>
<dbReference type="GeneID" id="92940240"/>
<dbReference type="KEGG" id="cby:CLM_3938"/>
<dbReference type="eggNOG" id="COG0093">
    <property type="taxonomic scope" value="Bacteria"/>
</dbReference>
<dbReference type="HOGENOM" id="CLU_095071_2_1_9"/>
<dbReference type="Proteomes" id="UP000001374">
    <property type="component" value="Chromosome"/>
</dbReference>
<dbReference type="GO" id="GO:0022625">
    <property type="term" value="C:cytosolic large ribosomal subunit"/>
    <property type="evidence" value="ECO:0007669"/>
    <property type="project" value="TreeGrafter"/>
</dbReference>
<dbReference type="GO" id="GO:0070180">
    <property type="term" value="F:large ribosomal subunit rRNA binding"/>
    <property type="evidence" value="ECO:0007669"/>
    <property type="project" value="TreeGrafter"/>
</dbReference>
<dbReference type="GO" id="GO:0003735">
    <property type="term" value="F:structural constituent of ribosome"/>
    <property type="evidence" value="ECO:0007669"/>
    <property type="project" value="InterPro"/>
</dbReference>
<dbReference type="GO" id="GO:0006412">
    <property type="term" value="P:translation"/>
    <property type="evidence" value="ECO:0007669"/>
    <property type="project" value="UniProtKB-UniRule"/>
</dbReference>
<dbReference type="CDD" id="cd00337">
    <property type="entry name" value="Ribosomal_uL14"/>
    <property type="match status" value="1"/>
</dbReference>
<dbReference type="FunFam" id="2.40.150.20:FF:000001">
    <property type="entry name" value="50S ribosomal protein L14"/>
    <property type="match status" value="1"/>
</dbReference>
<dbReference type="Gene3D" id="2.40.150.20">
    <property type="entry name" value="Ribosomal protein L14"/>
    <property type="match status" value="1"/>
</dbReference>
<dbReference type="HAMAP" id="MF_01367">
    <property type="entry name" value="Ribosomal_uL14"/>
    <property type="match status" value="1"/>
</dbReference>
<dbReference type="InterPro" id="IPR000218">
    <property type="entry name" value="Ribosomal_uL14"/>
</dbReference>
<dbReference type="InterPro" id="IPR005745">
    <property type="entry name" value="Ribosomal_uL14_bac-type"/>
</dbReference>
<dbReference type="InterPro" id="IPR019972">
    <property type="entry name" value="Ribosomal_uL14_CS"/>
</dbReference>
<dbReference type="InterPro" id="IPR036853">
    <property type="entry name" value="Ribosomal_uL14_sf"/>
</dbReference>
<dbReference type="NCBIfam" id="TIGR01067">
    <property type="entry name" value="rplN_bact"/>
    <property type="match status" value="1"/>
</dbReference>
<dbReference type="PANTHER" id="PTHR11761">
    <property type="entry name" value="50S/60S RIBOSOMAL PROTEIN L14/L23"/>
    <property type="match status" value="1"/>
</dbReference>
<dbReference type="PANTHER" id="PTHR11761:SF3">
    <property type="entry name" value="LARGE RIBOSOMAL SUBUNIT PROTEIN UL14M"/>
    <property type="match status" value="1"/>
</dbReference>
<dbReference type="Pfam" id="PF00238">
    <property type="entry name" value="Ribosomal_L14"/>
    <property type="match status" value="1"/>
</dbReference>
<dbReference type="SMART" id="SM01374">
    <property type="entry name" value="Ribosomal_L14"/>
    <property type="match status" value="1"/>
</dbReference>
<dbReference type="SUPFAM" id="SSF50193">
    <property type="entry name" value="Ribosomal protein L14"/>
    <property type="match status" value="1"/>
</dbReference>
<dbReference type="PROSITE" id="PS00049">
    <property type="entry name" value="RIBOSOMAL_L14"/>
    <property type="match status" value="1"/>
</dbReference>
<name>RL14_CLOBJ</name>
<organism>
    <name type="scientific">Clostridium botulinum (strain Kyoto / Type A2)</name>
    <dbReference type="NCBI Taxonomy" id="536232"/>
    <lineage>
        <taxon>Bacteria</taxon>
        <taxon>Bacillati</taxon>
        <taxon>Bacillota</taxon>
        <taxon>Clostridia</taxon>
        <taxon>Eubacteriales</taxon>
        <taxon>Clostridiaceae</taxon>
        <taxon>Clostridium</taxon>
    </lineage>
</organism>
<keyword id="KW-0687">Ribonucleoprotein</keyword>
<keyword id="KW-0689">Ribosomal protein</keyword>
<keyword id="KW-0694">RNA-binding</keyword>
<keyword id="KW-0699">rRNA-binding</keyword>
<reference key="1">
    <citation type="submission" date="2008-10" db="EMBL/GenBank/DDBJ databases">
        <title>Genome sequence of Clostridium botulinum A2 Kyoto.</title>
        <authorList>
            <person name="Shrivastava S."/>
            <person name="Brinkac L.M."/>
            <person name="Brown J.L."/>
            <person name="Bruce D."/>
            <person name="Detter C.C."/>
            <person name="Johnson E.A."/>
            <person name="Munk C.A."/>
            <person name="Smith L.A."/>
            <person name="Smith T.J."/>
            <person name="Sutton G."/>
            <person name="Brettin T.S."/>
        </authorList>
    </citation>
    <scope>NUCLEOTIDE SEQUENCE [LARGE SCALE GENOMIC DNA]</scope>
    <source>
        <strain>Kyoto / Type A2</strain>
    </source>
</reference>
<proteinExistence type="inferred from homology"/>
<protein>
    <recommendedName>
        <fullName evidence="1">Large ribosomal subunit protein uL14</fullName>
    </recommendedName>
    <alternativeName>
        <fullName evidence="2">50S ribosomal protein L14</fullName>
    </alternativeName>
</protein>
<gene>
    <name evidence="1" type="primary">rplN</name>
    <name type="ordered locus">CLM_3938</name>
</gene>
<accession>C1FMU1</accession>
<comment type="function">
    <text evidence="1">Binds to 23S rRNA. Forms part of two intersubunit bridges in the 70S ribosome.</text>
</comment>
<comment type="subunit">
    <text evidence="1">Part of the 50S ribosomal subunit. Forms a cluster with proteins L3 and L19. In the 70S ribosome, L14 and L19 interact and together make contacts with the 16S rRNA in bridges B5 and B8.</text>
</comment>
<comment type="similarity">
    <text evidence="1">Belongs to the universal ribosomal protein uL14 family.</text>
</comment>